<feature type="chain" id="PRO_0000323952" description="Uridylate kinase">
    <location>
        <begin position="1"/>
        <end position="249"/>
    </location>
</feature>
<feature type="region of interest" description="Involved in allosteric activation by GTP" evidence="1">
    <location>
        <begin position="30"/>
        <end position="35"/>
    </location>
</feature>
<feature type="binding site" evidence="1">
    <location>
        <begin position="22"/>
        <end position="25"/>
    </location>
    <ligand>
        <name>ATP</name>
        <dbReference type="ChEBI" id="CHEBI:30616"/>
    </ligand>
</feature>
<feature type="binding site" evidence="1">
    <location>
        <position position="64"/>
    </location>
    <ligand>
        <name>UMP</name>
        <dbReference type="ChEBI" id="CHEBI:57865"/>
    </ligand>
</feature>
<feature type="binding site" evidence="1">
    <location>
        <position position="65"/>
    </location>
    <ligand>
        <name>ATP</name>
        <dbReference type="ChEBI" id="CHEBI:30616"/>
    </ligand>
</feature>
<feature type="binding site" evidence="1">
    <location>
        <position position="69"/>
    </location>
    <ligand>
        <name>ATP</name>
        <dbReference type="ChEBI" id="CHEBI:30616"/>
    </ligand>
</feature>
<feature type="binding site" evidence="1">
    <location>
        <position position="84"/>
    </location>
    <ligand>
        <name>UMP</name>
        <dbReference type="ChEBI" id="CHEBI:57865"/>
    </ligand>
</feature>
<feature type="binding site" evidence="1">
    <location>
        <begin position="145"/>
        <end position="152"/>
    </location>
    <ligand>
        <name>UMP</name>
        <dbReference type="ChEBI" id="CHEBI:57865"/>
    </ligand>
</feature>
<feature type="binding site" evidence="1">
    <location>
        <position position="173"/>
    </location>
    <ligand>
        <name>ATP</name>
        <dbReference type="ChEBI" id="CHEBI:30616"/>
    </ligand>
</feature>
<feature type="binding site" evidence="1">
    <location>
        <position position="179"/>
    </location>
    <ligand>
        <name>ATP</name>
        <dbReference type="ChEBI" id="CHEBI:30616"/>
    </ligand>
</feature>
<feature type="binding site" evidence="1">
    <location>
        <position position="182"/>
    </location>
    <ligand>
        <name>ATP</name>
        <dbReference type="ChEBI" id="CHEBI:30616"/>
    </ligand>
</feature>
<name>PYRH_RUEST</name>
<dbReference type="EC" id="2.7.4.22" evidence="1"/>
<dbReference type="EMBL" id="CP000377">
    <property type="protein sequence ID" value="ABF64147.1"/>
    <property type="molecule type" value="Genomic_DNA"/>
</dbReference>
<dbReference type="RefSeq" id="WP_011538750.1">
    <property type="nucleotide sequence ID" value="NC_008044.1"/>
</dbReference>
<dbReference type="SMR" id="Q1GGR9"/>
<dbReference type="STRING" id="292414.TM1040_1414"/>
<dbReference type="KEGG" id="sit:TM1040_1414"/>
<dbReference type="eggNOG" id="COG0528">
    <property type="taxonomic scope" value="Bacteria"/>
</dbReference>
<dbReference type="HOGENOM" id="CLU_033861_0_0_5"/>
<dbReference type="OrthoDB" id="9807458at2"/>
<dbReference type="UniPathway" id="UPA00159">
    <property type="reaction ID" value="UER00275"/>
</dbReference>
<dbReference type="Proteomes" id="UP000000636">
    <property type="component" value="Chromosome"/>
</dbReference>
<dbReference type="GO" id="GO:0005737">
    <property type="term" value="C:cytoplasm"/>
    <property type="evidence" value="ECO:0007669"/>
    <property type="project" value="UniProtKB-SubCell"/>
</dbReference>
<dbReference type="GO" id="GO:0005524">
    <property type="term" value="F:ATP binding"/>
    <property type="evidence" value="ECO:0007669"/>
    <property type="project" value="UniProtKB-KW"/>
</dbReference>
<dbReference type="GO" id="GO:0033862">
    <property type="term" value="F:UMP kinase activity"/>
    <property type="evidence" value="ECO:0007669"/>
    <property type="project" value="UniProtKB-EC"/>
</dbReference>
<dbReference type="GO" id="GO:0044210">
    <property type="term" value="P:'de novo' CTP biosynthetic process"/>
    <property type="evidence" value="ECO:0007669"/>
    <property type="project" value="UniProtKB-UniRule"/>
</dbReference>
<dbReference type="GO" id="GO:0006225">
    <property type="term" value="P:UDP biosynthetic process"/>
    <property type="evidence" value="ECO:0007669"/>
    <property type="project" value="TreeGrafter"/>
</dbReference>
<dbReference type="CDD" id="cd04254">
    <property type="entry name" value="AAK_UMPK-PyrH-Ec"/>
    <property type="match status" value="1"/>
</dbReference>
<dbReference type="FunFam" id="3.40.1160.10:FF:000001">
    <property type="entry name" value="Uridylate kinase"/>
    <property type="match status" value="1"/>
</dbReference>
<dbReference type="Gene3D" id="3.40.1160.10">
    <property type="entry name" value="Acetylglutamate kinase-like"/>
    <property type="match status" value="1"/>
</dbReference>
<dbReference type="HAMAP" id="MF_01220_B">
    <property type="entry name" value="PyrH_B"/>
    <property type="match status" value="1"/>
</dbReference>
<dbReference type="InterPro" id="IPR036393">
    <property type="entry name" value="AceGlu_kinase-like_sf"/>
</dbReference>
<dbReference type="InterPro" id="IPR001048">
    <property type="entry name" value="Asp/Glu/Uridylate_kinase"/>
</dbReference>
<dbReference type="InterPro" id="IPR011817">
    <property type="entry name" value="Uridylate_kinase"/>
</dbReference>
<dbReference type="InterPro" id="IPR015963">
    <property type="entry name" value="Uridylate_kinase_bac"/>
</dbReference>
<dbReference type="NCBIfam" id="TIGR02075">
    <property type="entry name" value="pyrH_bact"/>
    <property type="match status" value="1"/>
</dbReference>
<dbReference type="PANTHER" id="PTHR42833">
    <property type="entry name" value="URIDYLATE KINASE"/>
    <property type="match status" value="1"/>
</dbReference>
<dbReference type="PANTHER" id="PTHR42833:SF4">
    <property type="entry name" value="URIDYLATE KINASE PUMPKIN, CHLOROPLASTIC"/>
    <property type="match status" value="1"/>
</dbReference>
<dbReference type="Pfam" id="PF00696">
    <property type="entry name" value="AA_kinase"/>
    <property type="match status" value="1"/>
</dbReference>
<dbReference type="PIRSF" id="PIRSF005650">
    <property type="entry name" value="Uridylate_kin"/>
    <property type="match status" value="1"/>
</dbReference>
<dbReference type="SUPFAM" id="SSF53633">
    <property type="entry name" value="Carbamate kinase-like"/>
    <property type="match status" value="1"/>
</dbReference>
<organism>
    <name type="scientific">Ruegeria sp. (strain TM1040)</name>
    <name type="common">Silicibacter sp.</name>
    <dbReference type="NCBI Taxonomy" id="292414"/>
    <lineage>
        <taxon>Bacteria</taxon>
        <taxon>Pseudomonadati</taxon>
        <taxon>Pseudomonadota</taxon>
        <taxon>Alphaproteobacteria</taxon>
        <taxon>Rhodobacterales</taxon>
        <taxon>Roseobacteraceae</taxon>
        <taxon>Ruegeria</taxon>
    </lineage>
</organism>
<accession>Q1GGR9</accession>
<evidence type="ECO:0000255" key="1">
    <source>
        <dbReference type="HAMAP-Rule" id="MF_01220"/>
    </source>
</evidence>
<proteinExistence type="inferred from homology"/>
<reference key="1">
    <citation type="submission" date="2006-05" db="EMBL/GenBank/DDBJ databases">
        <title>Complete sequence of chromosome of Silicibacter sp. TM1040.</title>
        <authorList>
            <consortium name="US DOE Joint Genome Institute"/>
            <person name="Copeland A."/>
            <person name="Lucas S."/>
            <person name="Lapidus A."/>
            <person name="Barry K."/>
            <person name="Detter J.C."/>
            <person name="Glavina del Rio T."/>
            <person name="Hammon N."/>
            <person name="Israni S."/>
            <person name="Dalin E."/>
            <person name="Tice H."/>
            <person name="Pitluck S."/>
            <person name="Brettin T."/>
            <person name="Bruce D."/>
            <person name="Han C."/>
            <person name="Tapia R."/>
            <person name="Goodwin L."/>
            <person name="Thompson L.S."/>
            <person name="Gilna P."/>
            <person name="Schmutz J."/>
            <person name="Larimer F."/>
            <person name="Land M."/>
            <person name="Hauser L."/>
            <person name="Kyrpides N."/>
            <person name="Kim E."/>
            <person name="Belas R."/>
            <person name="Moran M.A."/>
            <person name="Buchan A."/>
            <person name="Gonzalez J.M."/>
            <person name="Schell M.A."/>
            <person name="Sun F."/>
            <person name="Richardson P."/>
        </authorList>
    </citation>
    <scope>NUCLEOTIDE SEQUENCE [LARGE SCALE GENOMIC DNA]</scope>
    <source>
        <strain>TM1040</strain>
    </source>
</reference>
<sequence>MPQSPEQPDVSSTVSYNRVMLKISGEALMGTQGFGLHPPTVRRIAEEVKSVHDLGVEICMVIGGGNIFRGLSGSAQGMERTTADYMGMLATVMNALGMQSALEDLGVFTRVISAIRMDEVAEPYIRRRAVRHLEKKRVCIFAAGTGNPYFTTDTAATLRANEMNCEAIFMGKNGVDGVYDKDPKTNEDAKRYDSVSYDDVLAKRLKVMDASAIALARDNNLPLIVFGLDEPGGFRGVLAGEGTYTKVHG</sequence>
<gene>
    <name evidence="1" type="primary">pyrH</name>
    <name type="ordered locus">TM1040_1414</name>
</gene>
<keyword id="KW-0021">Allosteric enzyme</keyword>
<keyword id="KW-0067">ATP-binding</keyword>
<keyword id="KW-0963">Cytoplasm</keyword>
<keyword id="KW-0418">Kinase</keyword>
<keyword id="KW-0547">Nucleotide-binding</keyword>
<keyword id="KW-0665">Pyrimidine biosynthesis</keyword>
<keyword id="KW-1185">Reference proteome</keyword>
<keyword id="KW-0808">Transferase</keyword>
<comment type="function">
    <text evidence="1">Catalyzes the reversible phosphorylation of UMP to UDP.</text>
</comment>
<comment type="catalytic activity">
    <reaction evidence="1">
        <text>UMP + ATP = UDP + ADP</text>
        <dbReference type="Rhea" id="RHEA:24400"/>
        <dbReference type="ChEBI" id="CHEBI:30616"/>
        <dbReference type="ChEBI" id="CHEBI:57865"/>
        <dbReference type="ChEBI" id="CHEBI:58223"/>
        <dbReference type="ChEBI" id="CHEBI:456216"/>
        <dbReference type="EC" id="2.7.4.22"/>
    </reaction>
</comment>
<comment type="activity regulation">
    <text evidence="1">Allosterically activated by GTP. Inhibited by UTP.</text>
</comment>
<comment type="pathway">
    <text evidence="1">Pyrimidine metabolism; CTP biosynthesis via de novo pathway; UDP from UMP (UMPK route): step 1/1.</text>
</comment>
<comment type="subunit">
    <text evidence="1">Homohexamer.</text>
</comment>
<comment type="subcellular location">
    <subcellularLocation>
        <location evidence="1">Cytoplasm</location>
    </subcellularLocation>
</comment>
<comment type="similarity">
    <text evidence="1">Belongs to the UMP kinase family.</text>
</comment>
<protein>
    <recommendedName>
        <fullName evidence="1">Uridylate kinase</fullName>
        <shortName evidence="1">UK</shortName>
        <ecNumber evidence="1">2.7.4.22</ecNumber>
    </recommendedName>
    <alternativeName>
        <fullName evidence="1">Uridine monophosphate kinase</fullName>
        <shortName evidence="1">UMP kinase</shortName>
        <shortName evidence="1">UMPK</shortName>
    </alternativeName>
</protein>